<gene>
    <name evidence="1" type="primary">gpmA</name>
    <name type="ordered locus">LBA0185</name>
</gene>
<proteinExistence type="inferred from homology"/>
<dbReference type="EC" id="5.4.2.11" evidence="1"/>
<dbReference type="EMBL" id="CP000033">
    <property type="protein sequence ID" value="AAV42081.1"/>
    <property type="molecule type" value="Genomic_DNA"/>
</dbReference>
<dbReference type="RefSeq" id="WP_003548802.1">
    <property type="nucleotide sequence ID" value="NC_006814.3"/>
</dbReference>
<dbReference type="RefSeq" id="YP_193112.1">
    <property type="nucleotide sequence ID" value="NC_006814.3"/>
</dbReference>
<dbReference type="SMR" id="Q5FMJ3"/>
<dbReference type="STRING" id="272621.LBA0185"/>
<dbReference type="KEGG" id="lac:LBA0185"/>
<dbReference type="PATRIC" id="fig|272621.13.peg.176"/>
<dbReference type="eggNOG" id="COG0588">
    <property type="taxonomic scope" value="Bacteria"/>
</dbReference>
<dbReference type="HOGENOM" id="CLU_033323_1_5_9"/>
<dbReference type="OrthoDB" id="9781415at2"/>
<dbReference type="BioCyc" id="LACI272621:G1G49-178-MONOMER"/>
<dbReference type="UniPathway" id="UPA00109">
    <property type="reaction ID" value="UER00186"/>
</dbReference>
<dbReference type="Proteomes" id="UP000006381">
    <property type="component" value="Chromosome"/>
</dbReference>
<dbReference type="GO" id="GO:0004619">
    <property type="term" value="F:phosphoglycerate mutase activity"/>
    <property type="evidence" value="ECO:0007669"/>
    <property type="project" value="UniProtKB-EC"/>
</dbReference>
<dbReference type="GO" id="GO:0006094">
    <property type="term" value="P:gluconeogenesis"/>
    <property type="evidence" value="ECO:0007669"/>
    <property type="project" value="UniProtKB-UniRule"/>
</dbReference>
<dbReference type="GO" id="GO:0006096">
    <property type="term" value="P:glycolytic process"/>
    <property type="evidence" value="ECO:0007669"/>
    <property type="project" value="UniProtKB-UniRule"/>
</dbReference>
<dbReference type="CDD" id="cd07067">
    <property type="entry name" value="HP_PGM_like"/>
    <property type="match status" value="1"/>
</dbReference>
<dbReference type="FunFam" id="3.40.50.1240:FF:000003">
    <property type="entry name" value="2,3-bisphosphoglycerate-dependent phosphoglycerate mutase"/>
    <property type="match status" value="1"/>
</dbReference>
<dbReference type="Gene3D" id="3.40.50.1240">
    <property type="entry name" value="Phosphoglycerate mutase-like"/>
    <property type="match status" value="1"/>
</dbReference>
<dbReference type="HAMAP" id="MF_01039">
    <property type="entry name" value="PGAM_GpmA"/>
    <property type="match status" value="1"/>
</dbReference>
<dbReference type="InterPro" id="IPR013078">
    <property type="entry name" value="His_Pase_superF_clade-1"/>
</dbReference>
<dbReference type="InterPro" id="IPR029033">
    <property type="entry name" value="His_PPase_superfam"/>
</dbReference>
<dbReference type="InterPro" id="IPR001345">
    <property type="entry name" value="PG/BPGM_mutase_AS"/>
</dbReference>
<dbReference type="InterPro" id="IPR005952">
    <property type="entry name" value="Phosphogly_mut1"/>
</dbReference>
<dbReference type="NCBIfam" id="TIGR01258">
    <property type="entry name" value="pgm_1"/>
    <property type="match status" value="1"/>
</dbReference>
<dbReference type="NCBIfam" id="NF010713">
    <property type="entry name" value="PRK14115.1"/>
    <property type="match status" value="1"/>
</dbReference>
<dbReference type="NCBIfam" id="NF010714">
    <property type="entry name" value="PRK14116.1"/>
    <property type="match status" value="1"/>
</dbReference>
<dbReference type="PANTHER" id="PTHR11931">
    <property type="entry name" value="PHOSPHOGLYCERATE MUTASE"/>
    <property type="match status" value="1"/>
</dbReference>
<dbReference type="Pfam" id="PF00300">
    <property type="entry name" value="His_Phos_1"/>
    <property type="match status" value="1"/>
</dbReference>
<dbReference type="PIRSF" id="PIRSF000709">
    <property type="entry name" value="6PFK_2-Ptase"/>
    <property type="match status" value="1"/>
</dbReference>
<dbReference type="SMART" id="SM00855">
    <property type="entry name" value="PGAM"/>
    <property type="match status" value="1"/>
</dbReference>
<dbReference type="SUPFAM" id="SSF53254">
    <property type="entry name" value="Phosphoglycerate mutase-like"/>
    <property type="match status" value="1"/>
</dbReference>
<dbReference type="PROSITE" id="PS00175">
    <property type="entry name" value="PG_MUTASE"/>
    <property type="match status" value="1"/>
</dbReference>
<organism>
    <name type="scientific">Lactobacillus acidophilus (strain ATCC 700396 / NCK56 / N2 / NCFM)</name>
    <dbReference type="NCBI Taxonomy" id="272621"/>
    <lineage>
        <taxon>Bacteria</taxon>
        <taxon>Bacillati</taxon>
        <taxon>Bacillota</taxon>
        <taxon>Bacilli</taxon>
        <taxon>Lactobacillales</taxon>
        <taxon>Lactobacillaceae</taxon>
        <taxon>Lactobacillus</taxon>
    </lineage>
</organism>
<comment type="function">
    <text evidence="1">Catalyzes the interconversion of 2-phosphoglycerate and 3-phosphoglycerate.</text>
</comment>
<comment type="catalytic activity">
    <reaction evidence="1">
        <text>(2R)-2-phosphoglycerate = (2R)-3-phosphoglycerate</text>
        <dbReference type="Rhea" id="RHEA:15901"/>
        <dbReference type="ChEBI" id="CHEBI:58272"/>
        <dbReference type="ChEBI" id="CHEBI:58289"/>
        <dbReference type="EC" id="5.4.2.11"/>
    </reaction>
</comment>
<comment type="pathway">
    <text evidence="1">Carbohydrate degradation; glycolysis; pyruvate from D-glyceraldehyde 3-phosphate: step 3/5.</text>
</comment>
<comment type="similarity">
    <text evidence="1">Belongs to the phosphoglycerate mutase family. BPG-dependent PGAM subfamily.</text>
</comment>
<feature type="chain" id="PRO_0000229123" description="2,3-bisphosphoglycerate-dependent phosphoglycerate mutase">
    <location>
        <begin position="1"/>
        <end position="230"/>
    </location>
</feature>
<feature type="active site" description="Tele-phosphohistidine intermediate" evidence="1">
    <location>
        <position position="9"/>
    </location>
</feature>
<feature type="active site" description="Proton donor/acceptor" evidence="1">
    <location>
        <position position="87"/>
    </location>
</feature>
<feature type="binding site" evidence="1">
    <location>
        <begin position="8"/>
        <end position="15"/>
    </location>
    <ligand>
        <name>substrate</name>
    </ligand>
</feature>
<feature type="binding site" evidence="1">
    <location>
        <begin position="21"/>
        <end position="22"/>
    </location>
    <ligand>
        <name>substrate</name>
    </ligand>
</feature>
<feature type="binding site" evidence="1">
    <location>
        <position position="60"/>
    </location>
    <ligand>
        <name>substrate</name>
    </ligand>
</feature>
<feature type="binding site" evidence="1">
    <location>
        <begin position="87"/>
        <end position="90"/>
    </location>
    <ligand>
        <name>substrate</name>
    </ligand>
</feature>
<feature type="binding site" evidence="1">
    <location>
        <position position="98"/>
    </location>
    <ligand>
        <name>substrate</name>
    </ligand>
</feature>
<feature type="binding site" evidence="1">
    <location>
        <begin position="114"/>
        <end position="115"/>
    </location>
    <ligand>
        <name>substrate</name>
    </ligand>
</feature>
<feature type="binding site" evidence="1">
    <location>
        <begin position="183"/>
        <end position="184"/>
    </location>
    <ligand>
        <name>substrate</name>
    </ligand>
</feature>
<feature type="site" description="Transition state stabilizer" evidence="1">
    <location>
        <position position="182"/>
    </location>
</feature>
<evidence type="ECO:0000255" key="1">
    <source>
        <dbReference type="HAMAP-Rule" id="MF_01039"/>
    </source>
</evidence>
<name>GPMA_LACAC</name>
<reference key="1">
    <citation type="journal article" date="2005" name="Proc. Natl. Acad. Sci. U.S.A.">
        <title>Complete genome sequence of the probiotic lactic acid bacterium Lactobacillus acidophilus NCFM.</title>
        <authorList>
            <person name="Altermann E."/>
            <person name="Russell W.M."/>
            <person name="Azcarate-Peril M.A."/>
            <person name="Barrangou R."/>
            <person name="Buck B.L."/>
            <person name="McAuliffe O."/>
            <person name="Souther N."/>
            <person name="Dobson A."/>
            <person name="Duong T."/>
            <person name="Callanan M."/>
            <person name="Lick S."/>
            <person name="Hamrick A."/>
            <person name="Cano R."/>
            <person name="Klaenhammer T.R."/>
        </authorList>
    </citation>
    <scope>NUCLEOTIDE SEQUENCE [LARGE SCALE GENOMIC DNA]</scope>
    <source>
        <strain>ATCC 700396 / NCK56 / N2 / NCFM</strain>
    </source>
</reference>
<sequence>MSKLVLIRHGQSEWNLSNQFTGWVDVNLSEKGVEEAKKAGRLIKEHGLEFDQAYTSLLTRAIKTLHYALEESDQLWIPETKTWRLNERHYGALQGLNKKATAEKYGDEQVHIWRRSYDVLPPAIDDDNEFSQAHDRRYANLDPHIVPKAENLHVTLDRVMPFWEDNIAPDLLDGKNVIIAAHGNSLRALTKYIENISDDDIMDLEMKTGEPVVYTFDENLDVVNKEKLDD</sequence>
<keyword id="KW-0312">Gluconeogenesis</keyword>
<keyword id="KW-0324">Glycolysis</keyword>
<keyword id="KW-0413">Isomerase</keyword>
<keyword id="KW-1185">Reference proteome</keyword>
<protein>
    <recommendedName>
        <fullName evidence="1">2,3-bisphosphoglycerate-dependent phosphoglycerate mutase</fullName>
        <shortName evidence="1">BPG-dependent PGAM</shortName>
        <shortName evidence="1">PGAM</shortName>
        <shortName evidence="1">Phosphoglyceromutase</shortName>
        <shortName evidence="1">dPGM</shortName>
        <ecNumber evidence="1">5.4.2.11</ecNumber>
    </recommendedName>
</protein>
<accession>Q5FMJ3</accession>